<feature type="chain" id="PRO_0000323453" description="Elongation factor Ts">
    <location>
        <begin position="1"/>
        <end position="301"/>
    </location>
</feature>
<feature type="region of interest" description="Involved in Mg(2+) ion dislocation from EF-Tu" evidence="1">
    <location>
        <begin position="82"/>
        <end position="85"/>
    </location>
</feature>
<gene>
    <name evidence="1" type="primary">tsf</name>
    <name type="ordered locus">HNE_1769</name>
</gene>
<accession>Q0C1C0</accession>
<protein>
    <recommendedName>
        <fullName evidence="1">Elongation factor Ts</fullName>
        <shortName evidence="1">EF-Ts</shortName>
    </recommendedName>
</protein>
<reference key="1">
    <citation type="journal article" date="2006" name="J. Bacteriol.">
        <title>Comparative genomic evidence for a close relationship between the dimorphic prosthecate bacteria Hyphomonas neptunium and Caulobacter crescentus.</title>
        <authorList>
            <person name="Badger J.H."/>
            <person name="Hoover T.R."/>
            <person name="Brun Y.V."/>
            <person name="Weiner R.M."/>
            <person name="Laub M.T."/>
            <person name="Alexandre G."/>
            <person name="Mrazek J."/>
            <person name="Ren Q."/>
            <person name="Paulsen I.T."/>
            <person name="Nelson K.E."/>
            <person name="Khouri H.M."/>
            <person name="Radune D."/>
            <person name="Sosa J."/>
            <person name="Dodson R.J."/>
            <person name="Sullivan S.A."/>
            <person name="Rosovitz M.J."/>
            <person name="Madupu R."/>
            <person name="Brinkac L.M."/>
            <person name="Durkin A.S."/>
            <person name="Daugherty S.C."/>
            <person name="Kothari S.P."/>
            <person name="Giglio M.G."/>
            <person name="Zhou L."/>
            <person name="Haft D.H."/>
            <person name="Selengut J.D."/>
            <person name="Davidsen T.M."/>
            <person name="Yang Q."/>
            <person name="Zafar N."/>
            <person name="Ward N.L."/>
        </authorList>
    </citation>
    <scope>NUCLEOTIDE SEQUENCE [LARGE SCALE GENOMIC DNA]</scope>
    <source>
        <strain>ATCC 15444</strain>
    </source>
</reference>
<evidence type="ECO:0000255" key="1">
    <source>
        <dbReference type="HAMAP-Rule" id="MF_00050"/>
    </source>
</evidence>
<name>EFTS_HYPNA</name>
<proteinExistence type="inferred from homology"/>
<comment type="function">
    <text evidence="1">Associates with the EF-Tu.GDP complex and induces the exchange of GDP to GTP. It remains bound to the aminoacyl-tRNA.EF-Tu.GTP complex up to the GTP hydrolysis stage on the ribosome.</text>
</comment>
<comment type="subcellular location">
    <subcellularLocation>
        <location evidence="1">Cytoplasm</location>
    </subcellularLocation>
</comment>
<comment type="similarity">
    <text evidence="1">Belongs to the EF-Ts family.</text>
</comment>
<dbReference type="EMBL" id="CP000158">
    <property type="protein sequence ID" value="ABI77565.1"/>
    <property type="molecule type" value="Genomic_DNA"/>
</dbReference>
<dbReference type="RefSeq" id="WP_011646773.1">
    <property type="nucleotide sequence ID" value="NC_008358.1"/>
</dbReference>
<dbReference type="SMR" id="Q0C1C0"/>
<dbReference type="STRING" id="228405.HNE_1769"/>
<dbReference type="KEGG" id="hne:HNE_1769"/>
<dbReference type="eggNOG" id="COG0264">
    <property type="taxonomic scope" value="Bacteria"/>
</dbReference>
<dbReference type="HOGENOM" id="CLU_047155_2_0_5"/>
<dbReference type="Proteomes" id="UP000001959">
    <property type="component" value="Chromosome"/>
</dbReference>
<dbReference type="GO" id="GO:0005737">
    <property type="term" value="C:cytoplasm"/>
    <property type="evidence" value="ECO:0007669"/>
    <property type="project" value="UniProtKB-SubCell"/>
</dbReference>
<dbReference type="GO" id="GO:0003746">
    <property type="term" value="F:translation elongation factor activity"/>
    <property type="evidence" value="ECO:0007669"/>
    <property type="project" value="UniProtKB-UniRule"/>
</dbReference>
<dbReference type="CDD" id="cd14275">
    <property type="entry name" value="UBA_EF-Ts"/>
    <property type="match status" value="1"/>
</dbReference>
<dbReference type="FunFam" id="1.10.286.20:FF:000001">
    <property type="entry name" value="Elongation factor Ts"/>
    <property type="match status" value="1"/>
</dbReference>
<dbReference type="FunFam" id="1.10.8.10:FF:000001">
    <property type="entry name" value="Elongation factor Ts"/>
    <property type="match status" value="1"/>
</dbReference>
<dbReference type="Gene3D" id="1.10.286.20">
    <property type="match status" value="1"/>
</dbReference>
<dbReference type="Gene3D" id="1.10.8.10">
    <property type="entry name" value="DNA helicase RuvA subunit, C-terminal domain"/>
    <property type="match status" value="1"/>
</dbReference>
<dbReference type="Gene3D" id="3.30.479.20">
    <property type="entry name" value="Elongation factor Ts, dimerisation domain"/>
    <property type="match status" value="2"/>
</dbReference>
<dbReference type="HAMAP" id="MF_00050">
    <property type="entry name" value="EF_Ts"/>
    <property type="match status" value="1"/>
</dbReference>
<dbReference type="InterPro" id="IPR036402">
    <property type="entry name" value="EF-Ts_dimer_sf"/>
</dbReference>
<dbReference type="InterPro" id="IPR001816">
    <property type="entry name" value="Transl_elong_EFTs/EF1B"/>
</dbReference>
<dbReference type="InterPro" id="IPR014039">
    <property type="entry name" value="Transl_elong_EFTs/EF1B_dimer"/>
</dbReference>
<dbReference type="InterPro" id="IPR018101">
    <property type="entry name" value="Transl_elong_Ts_CS"/>
</dbReference>
<dbReference type="InterPro" id="IPR009060">
    <property type="entry name" value="UBA-like_sf"/>
</dbReference>
<dbReference type="NCBIfam" id="TIGR00116">
    <property type="entry name" value="tsf"/>
    <property type="match status" value="1"/>
</dbReference>
<dbReference type="PANTHER" id="PTHR11741">
    <property type="entry name" value="ELONGATION FACTOR TS"/>
    <property type="match status" value="1"/>
</dbReference>
<dbReference type="PANTHER" id="PTHR11741:SF0">
    <property type="entry name" value="ELONGATION FACTOR TS, MITOCHONDRIAL"/>
    <property type="match status" value="1"/>
</dbReference>
<dbReference type="Pfam" id="PF00889">
    <property type="entry name" value="EF_TS"/>
    <property type="match status" value="1"/>
</dbReference>
<dbReference type="SUPFAM" id="SSF54713">
    <property type="entry name" value="Elongation factor Ts (EF-Ts), dimerisation domain"/>
    <property type="match status" value="2"/>
</dbReference>
<dbReference type="SUPFAM" id="SSF46934">
    <property type="entry name" value="UBA-like"/>
    <property type="match status" value="1"/>
</dbReference>
<dbReference type="PROSITE" id="PS01126">
    <property type="entry name" value="EF_TS_1"/>
    <property type="match status" value="1"/>
</dbReference>
<dbReference type="PROSITE" id="PS01127">
    <property type="entry name" value="EF_TS_2"/>
    <property type="match status" value="1"/>
</dbReference>
<organism>
    <name type="scientific">Hyphomonas neptunium (strain ATCC 15444)</name>
    <dbReference type="NCBI Taxonomy" id="228405"/>
    <lineage>
        <taxon>Bacteria</taxon>
        <taxon>Pseudomonadati</taxon>
        <taxon>Pseudomonadota</taxon>
        <taxon>Alphaproteobacteria</taxon>
        <taxon>Hyphomonadales</taxon>
        <taxon>Hyphomonadaceae</taxon>
        <taxon>Hyphomonas</taxon>
    </lineage>
</organism>
<sequence>MAEITAALVKELREKTGAGMMDAKKALVENNGDQAAAIEWLRAKGLSKAAKKSDRAAAEGLVAVKLSDDGKSGAIVELNAETDFVARNEIFQKSLDGIAVAALKADGTVEAVSAAASPDGEGSVDDLIKRMIATIGENMTLRRVAKLSATGRVAAYTHNAVVPGMGKVGVLVALDGSGDLEDAGRKVAMHIAATSPAAATTEELDPALVESEKRVLTEQARESGKPDAVIEKMIVGRMQKFYKEVVLAEQPFIMDPDKTVGEFLKEQGATLKGFVHYKLGEGVEKAADNFADEVAALTKGA</sequence>
<keyword id="KW-0963">Cytoplasm</keyword>
<keyword id="KW-0251">Elongation factor</keyword>
<keyword id="KW-0648">Protein biosynthesis</keyword>
<keyword id="KW-1185">Reference proteome</keyword>